<evidence type="ECO:0000250" key="1"/>
<evidence type="ECO:0000250" key="2">
    <source>
        <dbReference type="UniProtKB" id="P0A817"/>
    </source>
</evidence>
<evidence type="ECO:0000250" key="3">
    <source>
        <dbReference type="UniProtKB" id="P13444"/>
    </source>
</evidence>
<evidence type="ECO:0000250" key="4">
    <source>
        <dbReference type="UniProtKB" id="Q00266"/>
    </source>
</evidence>
<evidence type="ECO:0000250" key="5">
    <source>
        <dbReference type="UniProtKB" id="Q96551"/>
    </source>
</evidence>
<evidence type="ECO:0000305" key="6"/>
<comment type="function">
    <text evidence="5">Catalyzes the formation of S-adenosylmethionine from methionine and ATP. The reaction comprises two steps that are both catalyzed by the same enzyme: formation of S-adenosylmethionine (AdoMet) and triphosphate, and subsequent hydrolysis of the triphosphate.</text>
</comment>
<comment type="catalytic activity">
    <reaction evidence="5">
        <text>L-methionine + ATP + H2O = S-adenosyl-L-methionine + phosphate + diphosphate</text>
        <dbReference type="Rhea" id="RHEA:21080"/>
        <dbReference type="ChEBI" id="CHEBI:15377"/>
        <dbReference type="ChEBI" id="CHEBI:30616"/>
        <dbReference type="ChEBI" id="CHEBI:33019"/>
        <dbReference type="ChEBI" id="CHEBI:43474"/>
        <dbReference type="ChEBI" id="CHEBI:57844"/>
        <dbReference type="ChEBI" id="CHEBI:59789"/>
        <dbReference type="EC" id="2.5.1.6"/>
    </reaction>
</comment>
<comment type="cofactor">
    <cofactor evidence="5">
        <name>Mn(2+)</name>
        <dbReference type="ChEBI" id="CHEBI:29035"/>
    </cofactor>
    <cofactor evidence="5">
        <name>Mg(2+)</name>
        <dbReference type="ChEBI" id="CHEBI:18420"/>
    </cofactor>
    <cofactor evidence="5">
        <name>Co(2+)</name>
        <dbReference type="ChEBI" id="CHEBI:48828"/>
    </cofactor>
    <text evidence="3 5">Binds 2 divalent ions per subunit. The metal ions interact primarily with the substrate (By similarity). Can utilize magnesium, manganese or cobalt (in vitro) (By similarity).</text>
</comment>
<comment type="cofactor">
    <cofactor evidence="5">
        <name>K(+)</name>
        <dbReference type="ChEBI" id="CHEBI:29103"/>
    </cofactor>
    <text evidence="3">Binds 1 potassium ion per subunit. The potassium ion interacts primarily with the substrate (By similarity).</text>
</comment>
<comment type="pathway">
    <text evidence="5">Amino-acid biosynthesis; S-adenosyl-L-methionine biosynthesis; S-adenosyl-L-methionine from L-methionine: step 1/1.</text>
</comment>
<comment type="subunit">
    <text evidence="1">Homotetramer.</text>
</comment>
<comment type="subcellular location">
    <subcellularLocation>
        <location evidence="1">Cytoplasm</location>
    </subcellularLocation>
</comment>
<comment type="tissue specificity">
    <text>Mainly in floral buds and roots.</text>
</comment>
<comment type="induction">
    <text>By fungal elicitor.</text>
</comment>
<comment type="similarity">
    <text evidence="6">Belongs to the AdoMet synthase family.</text>
</comment>
<feature type="chain" id="PRO_0000174474" description="S-adenosylmethionine synthase 1">
    <location>
        <begin position="1" status="less than"/>
        <end position="234"/>
    </location>
</feature>
<feature type="binding site" description="in other chain" evidence="4">
    <location>
        <begin position="10"/>
        <end position="12"/>
    </location>
    <ligand>
        <name>ATP</name>
        <dbReference type="ChEBI" id="CHEBI:30616"/>
        <note>ligand shared between two neighboring subunits</note>
    </ligand>
</feature>
<feature type="binding site" description="in other chain" evidence="4">
    <location>
        <begin position="78"/>
        <end position="81"/>
    </location>
    <ligand>
        <name>ATP</name>
        <dbReference type="ChEBI" id="CHEBI:30616"/>
        <note>ligand shared between two neighboring subunits</note>
    </ligand>
</feature>
<feature type="binding site" description="in other chain" evidence="4">
    <location>
        <position position="89"/>
    </location>
    <ligand>
        <name>ATP</name>
        <dbReference type="ChEBI" id="CHEBI:30616"/>
        <note>ligand shared between two neighboring subunits</note>
    </ligand>
</feature>
<feature type="binding site" evidence="2">
    <location>
        <position position="89"/>
    </location>
    <ligand>
        <name>L-methionine</name>
        <dbReference type="ChEBI" id="CHEBI:57844"/>
        <note>ligand shared between two neighboring subunits</note>
    </ligand>
</feature>
<feature type="binding site" description="in other chain" evidence="2">
    <location>
        <begin position="95"/>
        <end position="96"/>
    </location>
    <ligand>
        <name>ATP</name>
        <dbReference type="ChEBI" id="CHEBI:30616"/>
        <note>ligand shared between two neighboring subunits</note>
    </ligand>
</feature>
<feature type="binding site" evidence="2">
    <location>
        <position position="112"/>
    </location>
    <ligand>
        <name>ATP</name>
        <dbReference type="ChEBI" id="CHEBI:30616"/>
        <note>ligand shared between two neighboring subunits</note>
    </ligand>
</feature>
<feature type="binding site" evidence="2">
    <location>
        <position position="116"/>
    </location>
    <ligand>
        <name>ATP</name>
        <dbReference type="ChEBI" id="CHEBI:30616"/>
        <note>ligand shared between two neighboring subunits</note>
    </ligand>
</feature>
<feature type="binding site" evidence="3">
    <location>
        <position position="120"/>
    </location>
    <ligand>
        <name>ATP</name>
        <dbReference type="ChEBI" id="CHEBI:30616"/>
        <note>ligand shared between two neighboring subunits</note>
    </ligand>
</feature>
<feature type="binding site" description="in other chain" evidence="2">
    <location>
        <position position="120"/>
    </location>
    <ligand>
        <name>L-methionine</name>
        <dbReference type="ChEBI" id="CHEBI:57844"/>
        <note>ligand shared between two neighboring subunits</note>
    </ligand>
</feature>
<feature type="non-terminal residue">
    <location>
        <position position="1"/>
    </location>
</feature>
<organism>
    <name type="scientific">Petroselinum crispum</name>
    <name type="common">Parsley</name>
    <name type="synonym">Petroselinum hortense</name>
    <dbReference type="NCBI Taxonomy" id="4043"/>
    <lineage>
        <taxon>Eukaryota</taxon>
        <taxon>Viridiplantae</taxon>
        <taxon>Streptophyta</taxon>
        <taxon>Embryophyta</taxon>
        <taxon>Tracheophyta</taxon>
        <taxon>Spermatophyta</taxon>
        <taxon>Magnoliopsida</taxon>
        <taxon>eudicotyledons</taxon>
        <taxon>Gunneridae</taxon>
        <taxon>Pentapetalae</taxon>
        <taxon>asterids</taxon>
        <taxon>campanulids</taxon>
        <taxon>Apiales</taxon>
        <taxon>Apiaceae</taxon>
        <taxon>Apioideae</taxon>
        <taxon>apioid superclade</taxon>
        <taxon>Apieae</taxon>
        <taxon>Petroselinum</taxon>
    </lineage>
</organism>
<gene>
    <name type="primary">SMS-1</name>
</gene>
<protein>
    <recommendedName>
        <fullName>S-adenosylmethionine synthase 1</fullName>
        <shortName>AdoMet synthase 1</shortName>
        <ecNumber evidence="5">2.5.1.6</ecNumber>
    </recommendedName>
    <alternativeName>
        <fullName>Methionine adenosyltransferase 1</fullName>
        <shortName>MAT 1</shortName>
    </alternativeName>
</protein>
<sequence length="234" mass="25652">NGTCAWLRPDGKTQVTVEYQNDHGAMVPIRVHTILISTQHDETVTNDEIAADLKEHVIKPVVPENYLDEKTIFHLNPSGRFVIGGPHGDAGLTGRKIIIDTYGGWGAHGGGAFSGKDPTKVDRSGAYIVRQAAKSIVASGLARRCIVQVSYAIGVPEPLSVFVDTYGTGKIPDREILKIVKETFDFRPGMISINLDLKRGGNGRFLKTAAYGHFGREDPDFTWEVVKPLKWEKA</sequence>
<name>METK1_PETCR</name>
<reference key="1">
    <citation type="journal article" date="1992" name="Proc. Natl. Acad. Sci. U.S.A.">
        <title>Induction by fungal elicitor of S-adenosyl-L-methionine synthetase and S-adenosyl-L-homocysteine hydrolase mRNAs in cultured cells and leaves of Petroselinum crispum.</title>
        <authorList>
            <person name="Kawalleck P."/>
            <person name="Plesch G."/>
            <person name="Hahlbrock K."/>
            <person name="Somssich I.E."/>
        </authorList>
    </citation>
    <scope>NUCLEOTIDE SEQUENCE [MRNA]</scope>
    <source>
        <tissue>Leaf</tissue>
    </source>
</reference>
<dbReference type="EC" id="2.5.1.6" evidence="5"/>
<dbReference type="EMBL" id="M62758">
    <property type="protein sequence ID" value="AAA33857.1"/>
    <property type="molecule type" value="mRNA"/>
</dbReference>
<dbReference type="SMR" id="P31155"/>
<dbReference type="UniPathway" id="UPA00315">
    <property type="reaction ID" value="UER00080"/>
</dbReference>
<dbReference type="GO" id="GO:0005737">
    <property type="term" value="C:cytoplasm"/>
    <property type="evidence" value="ECO:0007669"/>
    <property type="project" value="UniProtKB-SubCell"/>
</dbReference>
<dbReference type="GO" id="GO:0005524">
    <property type="term" value="F:ATP binding"/>
    <property type="evidence" value="ECO:0007669"/>
    <property type="project" value="UniProtKB-KW"/>
</dbReference>
<dbReference type="GO" id="GO:0046872">
    <property type="term" value="F:metal ion binding"/>
    <property type="evidence" value="ECO:0007669"/>
    <property type="project" value="UniProtKB-KW"/>
</dbReference>
<dbReference type="GO" id="GO:0004478">
    <property type="term" value="F:methionine adenosyltransferase activity"/>
    <property type="evidence" value="ECO:0007669"/>
    <property type="project" value="UniProtKB-EC"/>
</dbReference>
<dbReference type="GO" id="GO:0006730">
    <property type="term" value="P:one-carbon metabolic process"/>
    <property type="evidence" value="ECO:0007669"/>
    <property type="project" value="UniProtKB-KW"/>
</dbReference>
<dbReference type="GO" id="GO:0006556">
    <property type="term" value="P:S-adenosylmethionine biosynthetic process"/>
    <property type="evidence" value="ECO:0007669"/>
    <property type="project" value="UniProtKB-UniPathway"/>
</dbReference>
<dbReference type="FunFam" id="3.30.300.10:FF:000003">
    <property type="entry name" value="S-adenosylmethionine synthase"/>
    <property type="match status" value="1"/>
</dbReference>
<dbReference type="FunFam" id="3.30.300.10:FF:000004">
    <property type="entry name" value="S-adenosylmethionine synthase"/>
    <property type="match status" value="1"/>
</dbReference>
<dbReference type="Gene3D" id="3.30.300.10">
    <property type="match status" value="3"/>
</dbReference>
<dbReference type="InterPro" id="IPR022631">
    <property type="entry name" value="ADOMET_SYNTHASE_CS"/>
</dbReference>
<dbReference type="InterPro" id="IPR022630">
    <property type="entry name" value="S-AdoMet_synt_C"/>
</dbReference>
<dbReference type="InterPro" id="IPR022629">
    <property type="entry name" value="S-AdoMet_synt_central"/>
</dbReference>
<dbReference type="InterPro" id="IPR002133">
    <property type="entry name" value="S-AdoMet_synthetase"/>
</dbReference>
<dbReference type="InterPro" id="IPR022636">
    <property type="entry name" value="S-AdoMet_synthetase_sfam"/>
</dbReference>
<dbReference type="NCBIfam" id="TIGR01034">
    <property type="entry name" value="metK"/>
    <property type="match status" value="1"/>
</dbReference>
<dbReference type="PANTHER" id="PTHR11964">
    <property type="entry name" value="S-ADENOSYLMETHIONINE SYNTHETASE"/>
    <property type="match status" value="1"/>
</dbReference>
<dbReference type="Pfam" id="PF02773">
    <property type="entry name" value="S-AdoMet_synt_C"/>
    <property type="match status" value="1"/>
</dbReference>
<dbReference type="Pfam" id="PF02772">
    <property type="entry name" value="S-AdoMet_synt_M"/>
    <property type="match status" value="1"/>
</dbReference>
<dbReference type="SUPFAM" id="SSF55973">
    <property type="entry name" value="S-adenosylmethionine synthetase"/>
    <property type="match status" value="2"/>
</dbReference>
<dbReference type="PROSITE" id="PS00377">
    <property type="entry name" value="ADOMET_SYNTHASE_2"/>
    <property type="match status" value="1"/>
</dbReference>
<accession>P31155</accession>
<proteinExistence type="evidence at transcript level"/>
<keyword id="KW-0067">ATP-binding</keyword>
<keyword id="KW-0170">Cobalt</keyword>
<keyword id="KW-0963">Cytoplasm</keyword>
<keyword id="KW-0460">Magnesium</keyword>
<keyword id="KW-0479">Metal-binding</keyword>
<keyword id="KW-0547">Nucleotide-binding</keyword>
<keyword id="KW-0554">One-carbon metabolism</keyword>
<keyword id="KW-0630">Potassium</keyword>
<keyword id="KW-0808">Transferase</keyword>